<keyword id="KW-0963">Cytoplasm</keyword>
<keyword id="KW-0539">Nucleus</keyword>
<keyword id="KW-0597">Phosphoprotein</keyword>
<keyword id="KW-1185">Reference proteome</keyword>
<name>STYX_PONAB</name>
<sequence>MEDVKLEFPSLPQCKEDAEEWTYPMRREMQEILPGLFLGPYSSAMKSKLPILQKHGITHIICIRQNIEANFIKPNFQQLFRYLVLDIADNPVENIIRFFPMTKEFIDGSLQMGGKVLVHGNAGISRSAAFVIAYIMETFGMKYRDAFAYVQERRFCINPNAGFVHQLQEYEAIYLAKLTIQMMSPLQIERSLSVHSGTTGSLKRTHEEEDDFGTMQVATAQNG</sequence>
<organism>
    <name type="scientific">Pongo abelii</name>
    <name type="common">Sumatran orangutan</name>
    <name type="synonym">Pongo pygmaeus abelii</name>
    <dbReference type="NCBI Taxonomy" id="9601"/>
    <lineage>
        <taxon>Eukaryota</taxon>
        <taxon>Metazoa</taxon>
        <taxon>Chordata</taxon>
        <taxon>Craniata</taxon>
        <taxon>Vertebrata</taxon>
        <taxon>Euteleostomi</taxon>
        <taxon>Mammalia</taxon>
        <taxon>Eutheria</taxon>
        <taxon>Euarchontoglires</taxon>
        <taxon>Primates</taxon>
        <taxon>Haplorrhini</taxon>
        <taxon>Catarrhini</taxon>
        <taxon>Hominidae</taxon>
        <taxon>Pongo</taxon>
    </lineage>
</organism>
<proteinExistence type="evidence at transcript level"/>
<feature type="chain" id="PRO_0000351653" description="Serine/threonine/tyrosine-interacting protein">
    <location>
        <begin position="1"/>
        <end position="223"/>
    </location>
</feature>
<feature type="domain" description="Tyrosine-protein phosphatase" evidence="3">
    <location>
        <begin position="28"/>
        <end position="176"/>
    </location>
</feature>
<feature type="region of interest" description="Disordered" evidence="4">
    <location>
        <begin position="197"/>
        <end position="223"/>
    </location>
</feature>
<feature type="short sequence motif" description="Interaction with FBXW7" evidence="2">
    <location>
        <begin position="76"/>
        <end position="78"/>
    </location>
</feature>
<feature type="modified residue" description="Phosphoserine" evidence="2">
    <location>
        <position position="184"/>
    </location>
</feature>
<feature type="modified residue" description="Phosphoserine" evidence="2">
    <location>
        <position position="193"/>
    </location>
</feature>
<feature type="modified residue" description="Phosphoserine" evidence="2">
    <location>
        <position position="201"/>
    </location>
</feature>
<gene>
    <name type="primary">STYX</name>
</gene>
<reference key="1">
    <citation type="submission" date="2004-11" db="EMBL/GenBank/DDBJ databases">
        <authorList>
            <consortium name="The German cDNA consortium"/>
        </authorList>
    </citation>
    <scope>NUCLEOTIDE SEQUENCE [LARGE SCALE MRNA]</scope>
    <source>
        <tissue>Kidney</tissue>
    </source>
</reference>
<dbReference type="EMBL" id="CR857861">
    <property type="protein sequence ID" value="CAH90114.1"/>
    <property type="molecule type" value="mRNA"/>
</dbReference>
<dbReference type="RefSeq" id="NP_001153320.1">
    <property type="nucleotide sequence ID" value="NM_001159848.1"/>
</dbReference>
<dbReference type="SMR" id="Q5RDP3"/>
<dbReference type="FunCoup" id="Q5RDP3">
    <property type="interactions" value="2940"/>
</dbReference>
<dbReference type="STRING" id="9601.ENSPPYP00000006613"/>
<dbReference type="GeneID" id="100294693"/>
<dbReference type="KEGG" id="pon:100294693"/>
<dbReference type="CTD" id="6815"/>
<dbReference type="eggNOG" id="KOG1716">
    <property type="taxonomic scope" value="Eukaryota"/>
</dbReference>
<dbReference type="InParanoid" id="Q5RDP3"/>
<dbReference type="OrthoDB" id="426001at2759"/>
<dbReference type="Proteomes" id="UP000001595">
    <property type="component" value="Unplaced"/>
</dbReference>
<dbReference type="GO" id="GO:0005737">
    <property type="term" value="C:cytoplasm"/>
    <property type="evidence" value="ECO:0000250"/>
    <property type="project" value="UniProtKB"/>
</dbReference>
<dbReference type="GO" id="GO:0005829">
    <property type="term" value="C:cytosol"/>
    <property type="evidence" value="ECO:0007669"/>
    <property type="project" value="UniProtKB-SubCell"/>
</dbReference>
<dbReference type="GO" id="GO:0005654">
    <property type="term" value="C:nucleoplasm"/>
    <property type="evidence" value="ECO:0007669"/>
    <property type="project" value="TreeGrafter"/>
</dbReference>
<dbReference type="GO" id="GO:0005634">
    <property type="term" value="C:nucleus"/>
    <property type="evidence" value="ECO:0000250"/>
    <property type="project" value="UniProtKB"/>
</dbReference>
<dbReference type="GO" id="GO:1990444">
    <property type="term" value="F:F-box domain binding"/>
    <property type="evidence" value="ECO:0007669"/>
    <property type="project" value="TreeGrafter"/>
</dbReference>
<dbReference type="GO" id="GO:0062026">
    <property type="term" value="P:negative regulation of SCF-dependent proteasomal ubiquitin-dependent catabolic process"/>
    <property type="evidence" value="ECO:0007669"/>
    <property type="project" value="TreeGrafter"/>
</dbReference>
<dbReference type="GO" id="GO:0070372">
    <property type="term" value="P:regulation of ERK1 and ERK2 cascade"/>
    <property type="evidence" value="ECO:0000250"/>
    <property type="project" value="UniProtKB"/>
</dbReference>
<dbReference type="CDD" id="cd14522">
    <property type="entry name" value="DSP_STYX"/>
    <property type="match status" value="1"/>
</dbReference>
<dbReference type="FunFam" id="3.90.190.10:FF:000036">
    <property type="entry name" value="Serine/threonine/tyrosine-interacting protein a"/>
    <property type="match status" value="1"/>
</dbReference>
<dbReference type="Gene3D" id="3.90.190.10">
    <property type="entry name" value="Protein tyrosine phosphatase superfamily"/>
    <property type="match status" value="1"/>
</dbReference>
<dbReference type="InterPro" id="IPR000340">
    <property type="entry name" value="Dual-sp_phosphatase_cat-dom"/>
</dbReference>
<dbReference type="InterPro" id="IPR029021">
    <property type="entry name" value="Prot-tyrosine_phosphatase-like"/>
</dbReference>
<dbReference type="InterPro" id="IPR052449">
    <property type="entry name" value="STYX-Interacting_Phosphatase"/>
</dbReference>
<dbReference type="InterPro" id="IPR000387">
    <property type="entry name" value="Tyr_Pase_dom"/>
</dbReference>
<dbReference type="InterPro" id="IPR020422">
    <property type="entry name" value="TYR_PHOSPHATASE_DUAL_dom"/>
</dbReference>
<dbReference type="PANTHER" id="PTHR46588">
    <property type="entry name" value="SERINE/THREONINE/TYROSINE-INTERACTING PROTEIN"/>
    <property type="match status" value="1"/>
</dbReference>
<dbReference type="PANTHER" id="PTHR46588:SF1">
    <property type="entry name" value="SERINE_THREONINE_TYROSINE-INTERACTING PROTEIN"/>
    <property type="match status" value="1"/>
</dbReference>
<dbReference type="Pfam" id="PF00782">
    <property type="entry name" value="DSPc"/>
    <property type="match status" value="1"/>
</dbReference>
<dbReference type="SMART" id="SM00195">
    <property type="entry name" value="DSPc"/>
    <property type="match status" value="1"/>
</dbReference>
<dbReference type="SUPFAM" id="SSF52799">
    <property type="entry name" value="(Phosphotyrosine protein) phosphatases II"/>
    <property type="match status" value="1"/>
</dbReference>
<dbReference type="PROSITE" id="PS50056">
    <property type="entry name" value="TYR_PHOSPHATASE_2"/>
    <property type="match status" value="1"/>
</dbReference>
<dbReference type="PROSITE" id="PS50054">
    <property type="entry name" value="TYR_PHOSPHATASE_DUAL"/>
    <property type="match status" value="1"/>
</dbReference>
<accession>Q5RDP3</accession>
<comment type="function">
    <text evidence="1 2">Catalytically inactive phosphatase. Acts as a nuclear anchor for MAPK1/MAPK3 (ERK1/ERK2). Modulates cell-fate decisions and cell migration by spatiotemporal regulation of MAPK1/MAPK3 (ERK1/ERK2). By binding to the F-box of FBXW7, prevents the assembly of FBXW7 into the SCF E3 ubiquitin-protein ligase complex, and thereby inhibits degradation of its substrates (By similarity). Plays a role in spermatogenesis (By similarity).</text>
</comment>
<comment type="subunit">
    <text evidence="1 2">Interacts with MAPK1; independently of MAPK1 phosphorylation status (By similarity). Interacts with CARHSP1/Crhsp-24 (By similarity). Interacts (via FQQ motif) with FBXW7 (via F-box domain); the interaction is direct and prevents FBXW7 interaction with SKP1, a component of the SCF(FBXW7) complex.</text>
</comment>
<comment type="subcellular location">
    <subcellularLocation>
        <location evidence="2">Nucleus</location>
    </subcellularLocation>
    <subcellularLocation>
        <location evidence="2">Cytoplasm</location>
        <location evidence="2">Cytosol</location>
    </subcellularLocation>
    <text evidence="2">Predominantly localizes to the nucleus.</text>
</comment>
<comment type="similarity">
    <text evidence="5">Belongs to the protein-tyrosine phosphatase family. Non-receptor class subfamily.</text>
</comment>
<comment type="caution">
    <text evidence="2">Contains a Gly residue instead of a conserved Cys residue at position 120 in the dsPTPase catalytic loop which renders it catalytically inactive as a phosphatase (By similarity). The binding pocket is however sufficiently preserved to bind phosphorylated substrates, and may protect them from phosphatases (By similarity).</text>
</comment>
<protein>
    <recommendedName>
        <fullName evidence="5">Serine/threonine/tyrosine-interacting protein</fullName>
    </recommendedName>
    <alternativeName>
        <fullName evidence="5">Inactive tyrosine-protein phosphatase STYX</fullName>
    </alternativeName>
    <alternativeName>
        <fullName evidence="1">Phosphoserine/threonine/tyrosine interaction protein</fullName>
    </alternativeName>
</protein>
<evidence type="ECO:0000250" key="1">
    <source>
        <dbReference type="UniProtKB" id="Q60969"/>
    </source>
</evidence>
<evidence type="ECO:0000250" key="2">
    <source>
        <dbReference type="UniProtKB" id="Q8WUJ0"/>
    </source>
</evidence>
<evidence type="ECO:0000255" key="3">
    <source>
        <dbReference type="PROSITE-ProRule" id="PRU00160"/>
    </source>
</evidence>
<evidence type="ECO:0000256" key="4">
    <source>
        <dbReference type="SAM" id="MobiDB-lite"/>
    </source>
</evidence>
<evidence type="ECO:0000305" key="5"/>